<proteinExistence type="inferred from homology"/>
<organism>
    <name type="scientific">Arabidopsis thaliana</name>
    <name type="common">Mouse-ear cress</name>
    <dbReference type="NCBI Taxonomy" id="3702"/>
    <lineage>
        <taxon>Eukaryota</taxon>
        <taxon>Viridiplantae</taxon>
        <taxon>Streptophyta</taxon>
        <taxon>Embryophyta</taxon>
        <taxon>Tracheophyta</taxon>
        <taxon>Spermatophyta</taxon>
        <taxon>Magnoliopsida</taxon>
        <taxon>eudicotyledons</taxon>
        <taxon>Gunneridae</taxon>
        <taxon>Pentapetalae</taxon>
        <taxon>rosids</taxon>
        <taxon>malvids</taxon>
        <taxon>Brassicales</taxon>
        <taxon>Brassicaceae</taxon>
        <taxon>Camelineae</taxon>
        <taxon>Arabidopsis</taxon>
    </lineage>
</organism>
<keyword id="KW-1003">Cell membrane</keyword>
<keyword id="KW-0175">Coiled coil</keyword>
<keyword id="KW-0256">Endoplasmic reticulum</keyword>
<keyword id="KW-0472">Membrane</keyword>
<keyword id="KW-1185">Reference proteome</keyword>
<keyword id="KW-0812">Transmembrane</keyword>
<keyword id="KW-1133">Transmembrane helix</keyword>
<comment type="function">
    <text evidence="1">May regulate plasma membrane ATPase activity.</text>
</comment>
<comment type="subcellular location">
    <subcellularLocation>
        <location evidence="1">Cell membrane</location>
        <topology evidence="1">Single-pass membrane protein</topology>
    </subcellularLocation>
    <subcellularLocation>
        <location evidence="1">Endoplasmic reticulum membrane</location>
        <topology evidence="1">Single-pass membrane protein</topology>
    </subcellularLocation>
</comment>
<comment type="similarity">
    <text evidence="4">Belongs to the plant Proton pump-interactor protein family.</text>
</comment>
<comment type="sequence caution" evidence="4">
    <conflict type="erroneous gene model prediction">
        <sequence resource="EMBL-CDS" id="BAA97551"/>
    </conflict>
</comment>
<evidence type="ECO:0000250" key="1"/>
<evidence type="ECO:0000255" key="2"/>
<evidence type="ECO:0000256" key="3">
    <source>
        <dbReference type="SAM" id="MobiDB-lite"/>
    </source>
</evidence>
<evidence type="ECO:0000305" key="4"/>
<dbReference type="EMBL" id="AP002029">
    <property type="protein sequence ID" value="BAA97551.1"/>
    <property type="status" value="ALT_SEQ"/>
    <property type="molecule type" value="Genomic_DNA"/>
</dbReference>
<dbReference type="EMBL" id="CP002688">
    <property type="protein sequence ID" value="AED94098.1"/>
    <property type="molecule type" value="Genomic_DNA"/>
</dbReference>
<dbReference type="RefSeq" id="NP_198484.2">
    <property type="nucleotide sequence ID" value="NM_123026.2"/>
</dbReference>
<dbReference type="RefSeq" id="NP_568541.1">
    <property type="nucleotide sequence ID" value="NM_123036.1"/>
</dbReference>
<dbReference type="SMR" id="P0DKC0"/>
<dbReference type="STRING" id="3702.P0DKC0"/>
<dbReference type="EnsemblPlants" id="AT5G36690.1">
    <property type="protein sequence ID" value="AT5G36690.1"/>
    <property type="gene ID" value="AT5G36690"/>
</dbReference>
<dbReference type="EnsemblPlants" id="AT5G36780.1">
    <property type="protein sequence ID" value="AT5G36780.1"/>
    <property type="gene ID" value="AT5G36780"/>
</dbReference>
<dbReference type="GeneID" id="833634"/>
<dbReference type="Gramene" id="AT5G36690.1">
    <property type="protein sequence ID" value="AT5G36690.1"/>
    <property type="gene ID" value="AT5G36690"/>
</dbReference>
<dbReference type="Gramene" id="AT5G36780.1">
    <property type="protein sequence ID" value="AT5G36780.1"/>
    <property type="gene ID" value="AT5G36780"/>
</dbReference>
<dbReference type="KEGG" id="ath:AT5G36690"/>
<dbReference type="KEGG" id="ath:AT5G36780"/>
<dbReference type="Araport" id="AT5G36690"/>
<dbReference type="TAIR" id="AT5G36690"/>
<dbReference type="HOGENOM" id="CLU_018947_1_0_1"/>
<dbReference type="InParanoid" id="P0DKC0"/>
<dbReference type="OMA" id="NAGFHHN"/>
<dbReference type="PRO" id="PR:P0DKC0"/>
<dbReference type="Proteomes" id="UP000006548">
    <property type="component" value="Chromosome 5"/>
</dbReference>
<dbReference type="GO" id="GO:0005789">
    <property type="term" value="C:endoplasmic reticulum membrane"/>
    <property type="evidence" value="ECO:0000250"/>
    <property type="project" value="UniProtKB"/>
</dbReference>
<dbReference type="GO" id="GO:0005886">
    <property type="term" value="C:plasma membrane"/>
    <property type="evidence" value="ECO:0000250"/>
    <property type="project" value="UniProtKB"/>
</dbReference>
<dbReference type="GO" id="GO:0010155">
    <property type="term" value="P:regulation of proton transport"/>
    <property type="evidence" value="ECO:0000250"/>
    <property type="project" value="UniProtKB"/>
</dbReference>
<dbReference type="InterPro" id="IPR055282">
    <property type="entry name" value="PPI1-4"/>
</dbReference>
<dbReference type="PANTHER" id="PTHR32219:SF8">
    <property type="entry name" value="PROTON PUMP-INTERACTOR 2-RELATED"/>
    <property type="match status" value="1"/>
</dbReference>
<dbReference type="PANTHER" id="PTHR32219">
    <property type="entry name" value="RNA-BINDING PROTEIN YLMH-RELATED"/>
    <property type="match status" value="1"/>
</dbReference>
<protein>
    <recommendedName>
        <fullName>Proton pump-interactor 3B</fullName>
    </recommendedName>
</protein>
<accession>P0DKC0</accession>
<accession>F4K4G8</accession>
<accession>Q9LDQ8</accession>
<sequence length="576" mass="66452">MDEQIIFCDGFEVVPSPEINDLILYECDQSLTNSEVTTDEEEDTIFSGGDSSSGLAAEEDSSGDKPLSFYIVKQPVYDNPEIKAKIDEANQEIFRCNELRINVLSAKKSELAEVSSLYTQMESLVPQSEGYRMVIEEKKKEFDTLLEALRNLRCTTSDQLCFTKEELDHLSYIAQYQIEYGSIGLEEEDWMLKETEKPDGIILSEKEASINRVKSMALELNEVKNELDAITWKINDLSDKLWKSQNNIRVLDLEKAHILEKRDRFYARIKMLRIQRDKGNAAFFQSLSVMCKAKELAASGNVRELEVFASSEVDRFMTLWNDDKAFREDYVRRISHSLCERELNEDGRIKDADLQIFWEKKVPVKTIKRSEKVHKMNREDSSSNSSEDGNVITDKRKKETKSDVIVYEKPKKKEEEIDEEALKERKREEQLEKARLVMERKRKLQEKAAAKAAIRAQKEAEKKLKAIILSCSHFFNECEKKAKKKAAANSTSPSESDQVINDEKVRTLAVSGKEKHQKERLLFPKQRSFRYKHRGSGTEALPKAILNRRKARRYWVWGLSSAALAVSLVLVVLLLR</sequence>
<feature type="chain" id="PRO_0000420215" description="Proton pump-interactor 3B">
    <location>
        <begin position="1"/>
        <end position="576"/>
    </location>
</feature>
<feature type="transmembrane region" description="Helical" evidence="2">
    <location>
        <begin position="555"/>
        <end position="575"/>
    </location>
</feature>
<feature type="region of interest" description="Disordered" evidence="3">
    <location>
        <begin position="34"/>
        <end position="63"/>
    </location>
</feature>
<feature type="region of interest" description="Disordered" evidence="3">
    <location>
        <begin position="369"/>
        <end position="395"/>
    </location>
</feature>
<feature type="coiled-coil region" evidence="2">
    <location>
        <begin position="132"/>
        <end position="155"/>
    </location>
</feature>
<feature type="coiled-coil region" evidence="2">
    <location>
        <begin position="205"/>
        <end position="241"/>
    </location>
</feature>
<feature type="coiled-coil region" evidence="2">
    <location>
        <begin position="411"/>
        <end position="467"/>
    </location>
</feature>
<feature type="compositionally biased region" description="Basic and acidic residues" evidence="3">
    <location>
        <begin position="369"/>
        <end position="381"/>
    </location>
</feature>
<reference key="1">
    <citation type="submission" date="2000-05" db="EMBL/GenBank/DDBJ databases">
        <title>Structural analysis of Arabidopsis thaliana chromosome 5. XI.</title>
        <authorList>
            <person name="Kaneko T."/>
            <person name="Katoh T."/>
            <person name="Asamizu E."/>
            <person name="Sato S."/>
            <person name="Nakamura Y."/>
            <person name="Kotani H."/>
            <person name="Tabata S."/>
        </authorList>
    </citation>
    <scope>NUCLEOTIDE SEQUENCE [LARGE SCALE GENOMIC DNA]</scope>
    <source>
        <strain>cv. Columbia</strain>
    </source>
</reference>
<reference key="2">
    <citation type="journal article" date="2017" name="Plant J.">
        <title>Araport11: a complete reannotation of the Arabidopsis thaliana reference genome.</title>
        <authorList>
            <person name="Cheng C.Y."/>
            <person name="Krishnakumar V."/>
            <person name="Chan A.P."/>
            <person name="Thibaud-Nissen F."/>
            <person name="Schobel S."/>
            <person name="Town C.D."/>
        </authorList>
    </citation>
    <scope>GENOME REANNOTATION</scope>
    <source>
        <strain>cv. Columbia</strain>
    </source>
</reference>
<reference key="3">
    <citation type="journal article" date="2002" name="Plant J.">
        <title>A novel interaction partner for the C-terminus of Arabidopsis thaliana plasma membrane H+-ATPase (AHA1 isoform): site and mechanism of action on H+-ATPase activity differ from those of 14-3-3 proteins.</title>
        <authorList>
            <person name="Morandini P."/>
            <person name="Valera M."/>
            <person name="Albumi C."/>
            <person name="Bonza M.C."/>
            <person name="Giacometti S."/>
            <person name="Ravera G."/>
            <person name="Murgia I."/>
            <person name="Soave C."/>
            <person name="De Michelis M.I."/>
        </authorList>
    </citation>
    <scope>GENE FAMILY</scope>
    <scope>NOMENCLATURE</scope>
</reference>
<name>PPI3B_ARATH</name>
<gene>
    <name type="primary">PPI3B</name>
    <name type="ordered locus">At5g36690</name>
    <name type="ORF">F24C7.7</name>
</gene>